<proteinExistence type="evidence at protein level"/>
<comment type="function">
    <text evidence="1">Catalyzes the reversible isomerization-deamination of glucosamine 6-phosphate (GlcN6P) to form fructose 6-phosphate (Fru6P) and ammonium ion.</text>
</comment>
<comment type="catalytic activity">
    <reaction evidence="1">
        <text>alpha-D-glucosamine 6-phosphate + H2O = beta-D-fructose 6-phosphate + NH4(+)</text>
        <dbReference type="Rhea" id="RHEA:12172"/>
        <dbReference type="ChEBI" id="CHEBI:15377"/>
        <dbReference type="ChEBI" id="CHEBI:28938"/>
        <dbReference type="ChEBI" id="CHEBI:57634"/>
        <dbReference type="ChEBI" id="CHEBI:75989"/>
        <dbReference type="EC" id="3.5.99.6"/>
    </reaction>
</comment>
<comment type="activity regulation">
    <text evidence="1">Allosterically activated by N-acetylglucosamine 6-phosphate (GlcNAc6P).</text>
</comment>
<comment type="pathway">
    <text evidence="1">Amino-sugar metabolism; N-acetylneuraminate degradation; D-fructose 6-phosphate from N-acetylneuraminate: step 5/5.</text>
</comment>
<comment type="subunit">
    <text evidence="1">Homohexamer.</text>
</comment>
<comment type="similarity">
    <text evidence="1">Belongs to the glucosamine/galactosamine-6-phosphate isomerase family. NagB subfamily.</text>
</comment>
<gene>
    <name evidence="1" type="primary">nagB</name>
    <name type="ordered locus">PM0875</name>
</gene>
<dbReference type="EC" id="3.5.99.6" evidence="1"/>
<dbReference type="EMBL" id="AE004439">
    <property type="protein sequence ID" value="AAK02959.1"/>
    <property type="molecule type" value="Genomic_DNA"/>
</dbReference>
<dbReference type="RefSeq" id="WP_005716895.1">
    <property type="nucleotide sequence ID" value="NC_002663.1"/>
</dbReference>
<dbReference type="PDB" id="7LQM">
    <property type="method" value="X-ray"/>
    <property type="resolution" value="2.30 A"/>
    <property type="chains" value="A/B/C/D=1-267"/>
</dbReference>
<dbReference type="PDBsum" id="7LQM"/>
<dbReference type="SMR" id="Q9CMF4"/>
<dbReference type="STRING" id="272843.PM0875"/>
<dbReference type="EnsemblBacteria" id="AAK02959">
    <property type="protein sequence ID" value="AAK02959"/>
    <property type="gene ID" value="PM0875"/>
</dbReference>
<dbReference type="GeneID" id="77207696"/>
<dbReference type="KEGG" id="pmu:PM0875"/>
<dbReference type="HOGENOM" id="CLU_049611_0_1_6"/>
<dbReference type="OrthoDB" id="9791139at2"/>
<dbReference type="UniPathway" id="UPA00629">
    <property type="reaction ID" value="UER00684"/>
</dbReference>
<dbReference type="Proteomes" id="UP000000809">
    <property type="component" value="Chromosome"/>
</dbReference>
<dbReference type="GO" id="GO:0005737">
    <property type="term" value="C:cytoplasm"/>
    <property type="evidence" value="ECO:0007669"/>
    <property type="project" value="TreeGrafter"/>
</dbReference>
<dbReference type="GO" id="GO:0004342">
    <property type="term" value="F:glucosamine-6-phosphate deaminase activity"/>
    <property type="evidence" value="ECO:0007669"/>
    <property type="project" value="UniProtKB-UniRule"/>
</dbReference>
<dbReference type="GO" id="GO:0042802">
    <property type="term" value="F:identical protein binding"/>
    <property type="evidence" value="ECO:0007669"/>
    <property type="project" value="TreeGrafter"/>
</dbReference>
<dbReference type="GO" id="GO:0005975">
    <property type="term" value="P:carbohydrate metabolic process"/>
    <property type="evidence" value="ECO:0007669"/>
    <property type="project" value="InterPro"/>
</dbReference>
<dbReference type="GO" id="GO:0006043">
    <property type="term" value="P:glucosamine catabolic process"/>
    <property type="evidence" value="ECO:0007669"/>
    <property type="project" value="TreeGrafter"/>
</dbReference>
<dbReference type="GO" id="GO:0006046">
    <property type="term" value="P:N-acetylglucosamine catabolic process"/>
    <property type="evidence" value="ECO:0007669"/>
    <property type="project" value="TreeGrafter"/>
</dbReference>
<dbReference type="GO" id="GO:0019262">
    <property type="term" value="P:N-acetylneuraminate catabolic process"/>
    <property type="evidence" value="ECO:0007669"/>
    <property type="project" value="UniProtKB-UniRule"/>
</dbReference>
<dbReference type="CDD" id="cd01399">
    <property type="entry name" value="GlcN6P_deaminase"/>
    <property type="match status" value="1"/>
</dbReference>
<dbReference type="FunFam" id="3.40.50.1360:FF:000002">
    <property type="entry name" value="Glucosamine-6-phosphate deaminase"/>
    <property type="match status" value="1"/>
</dbReference>
<dbReference type="Gene3D" id="3.40.50.1360">
    <property type="match status" value="1"/>
</dbReference>
<dbReference type="HAMAP" id="MF_01241">
    <property type="entry name" value="GlcN6P_deamin"/>
    <property type="match status" value="1"/>
</dbReference>
<dbReference type="InterPro" id="IPR006148">
    <property type="entry name" value="Glc/Gal-6P_isomerase"/>
</dbReference>
<dbReference type="InterPro" id="IPR004547">
    <property type="entry name" value="Glucosamine6P_isomerase"/>
</dbReference>
<dbReference type="InterPro" id="IPR018321">
    <property type="entry name" value="Glucosamine6P_isomerase_CS"/>
</dbReference>
<dbReference type="InterPro" id="IPR037171">
    <property type="entry name" value="NagB/RpiA_transferase-like"/>
</dbReference>
<dbReference type="NCBIfam" id="TIGR00502">
    <property type="entry name" value="nagB"/>
    <property type="match status" value="1"/>
</dbReference>
<dbReference type="PANTHER" id="PTHR11280">
    <property type="entry name" value="GLUCOSAMINE-6-PHOSPHATE ISOMERASE"/>
    <property type="match status" value="1"/>
</dbReference>
<dbReference type="PANTHER" id="PTHR11280:SF5">
    <property type="entry name" value="GLUCOSAMINE-6-PHOSPHATE ISOMERASE"/>
    <property type="match status" value="1"/>
</dbReference>
<dbReference type="Pfam" id="PF01182">
    <property type="entry name" value="Glucosamine_iso"/>
    <property type="match status" value="1"/>
</dbReference>
<dbReference type="SUPFAM" id="SSF100950">
    <property type="entry name" value="NagB/RpiA/CoA transferase-like"/>
    <property type="match status" value="1"/>
</dbReference>
<dbReference type="PROSITE" id="PS01161">
    <property type="entry name" value="GLC_GALNAC_ISOMERASE"/>
    <property type="match status" value="1"/>
</dbReference>
<organism>
    <name type="scientific">Pasteurella multocida (strain Pm70)</name>
    <dbReference type="NCBI Taxonomy" id="272843"/>
    <lineage>
        <taxon>Bacteria</taxon>
        <taxon>Pseudomonadati</taxon>
        <taxon>Pseudomonadota</taxon>
        <taxon>Gammaproteobacteria</taxon>
        <taxon>Pasteurellales</taxon>
        <taxon>Pasteurellaceae</taxon>
        <taxon>Pasteurella</taxon>
    </lineage>
</organism>
<keyword id="KW-0002">3D-structure</keyword>
<keyword id="KW-0021">Allosteric enzyme</keyword>
<keyword id="KW-0119">Carbohydrate metabolism</keyword>
<keyword id="KW-0378">Hydrolase</keyword>
<keyword id="KW-1185">Reference proteome</keyword>
<protein>
    <recommendedName>
        <fullName evidence="1">Glucosamine-6-phosphate deaminase</fullName>
        <ecNumber evidence="1">3.5.99.6</ecNumber>
    </recommendedName>
    <alternativeName>
        <fullName evidence="1">GlcN6P deaminase</fullName>
        <shortName evidence="1">GNPDA</shortName>
    </alternativeName>
    <alternativeName>
        <fullName evidence="1">Glucosamine-6-phosphate isomerase</fullName>
    </alternativeName>
</protein>
<name>NAGB_PASMU</name>
<sequence length="267" mass="30207">MRLIPLHNVDQVAKWSARYIVDRINQFQPTEARPFVLGLPTGGTPLKTYEALIELYKAGEVSFKHVVTFNMDEYVGLPKEHPESYHSFMYKNFFDHVDIQEKNINILNGNTEDHDAECQRYEEKIKSYGKIHLFMGGVGVDGHIAFNEPASSLSSRTRIKTLTEDTLIANSRFFDNDVNKVPKYALTIGVGTLLDAEEVMILVTGYNKAQALQAAVEGSINHLWTVTALQMHRRAIIVCDEPATQELKVKTVKYFTELEASAIRSVK</sequence>
<evidence type="ECO:0000255" key="1">
    <source>
        <dbReference type="HAMAP-Rule" id="MF_01241"/>
    </source>
</evidence>
<evidence type="ECO:0007829" key="2">
    <source>
        <dbReference type="PDB" id="7LQM"/>
    </source>
</evidence>
<reference key="1">
    <citation type="journal article" date="2001" name="Proc. Natl. Acad. Sci. U.S.A.">
        <title>Complete genomic sequence of Pasteurella multocida Pm70.</title>
        <authorList>
            <person name="May B.J."/>
            <person name="Zhang Q."/>
            <person name="Li L.L."/>
            <person name="Paustian M.L."/>
            <person name="Whittam T.S."/>
            <person name="Kapur V."/>
        </authorList>
    </citation>
    <scope>NUCLEOTIDE SEQUENCE [LARGE SCALE GENOMIC DNA]</scope>
    <source>
        <strain>Pm70</strain>
    </source>
</reference>
<feature type="chain" id="PRO_0000160158" description="Glucosamine-6-phosphate deaminase">
    <location>
        <begin position="1"/>
        <end position="267"/>
    </location>
</feature>
<feature type="active site" description="Proton acceptor; for enolization step" evidence="1">
    <location>
        <position position="72"/>
    </location>
</feature>
<feature type="active site" description="For ring-opening step" evidence="1">
    <location>
        <position position="141"/>
    </location>
</feature>
<feature type="active site" description="Proton acceptor; for ring-opening step" evidence="1">
    <location>
        <position position="143"/>
    </location>
</feature>
<feature type="active site" description="For ring-opening step" evidence="1">
    <location>
        <position position="148"/>
    </location>
</feature>
<feature type="site" description="Part of the allosteric site" evidence="1">
    <location>
        <position position="151"/>
    </location>
</feature>
<feature type="site" description="Part of the allosteric site" evidence="1">
    <location>
        <position position="158"/>
    </location>
</feature>
<feature type="site" description="Part of the allosteric site" evidence="1">
    <location>
        <position position="160"/>
    </location>
</feature>
<feature type="site" description="Part of the allosteric site" evidence="1">
    <location>
        <position position="161"/>
    </location>
</feature>
<feature type="site" description="Part of the allosteric site" evidence="1">
    <location>
        <position position="254"/>
    </location>
</feature>
<feature type="strand" evidence="2">
    <location>
        <begin position="2"/>
        <end position="5"/>
    </location>
</feature>
<feature type="helix" evidence="2">
    <location>
        <begin position="9"/>
        <end position="27"/>
    </location>
</feature>
<feature type="strand" evidence="2">
    <location>
        <begin position="31"/>
        <end position="33"/>
    </location>
</feature>
<feature type="strand" evidence="2">
    <location>
        <begin position="35"/>
        <end position="39"/>
    </location>
</feature>
<feature type="helix" evidence="2">
    <location>
        <begin position="43"/>
        <end position="57"/>
    </location>
</feature>
<feature type="strand" evidence="2">
    <location>
        <begin position="66"/>
        <end position="77"/>
    </location>
</feature>
<feature type="helix" evidence="2">
    <location>
        <begin position="85"/>
        <end position="92"/>
    </location>
</feature>
<feature type="helix" evidence="2">
    <location>
        <begin position="94"/>
        <end position="96"/>
    </location>
</feature>
<feature type="helix" evidence="2">
    <location>
        <begin position="101"/>
        <end position="103"/>
    </location>
</feature>
<feature type="helix" evidence="2">
    <location>
        <begin position="114"/>
        <end position="127"/>
    </location>
</feature>
<feature type="strand" evidence="2">
    <location>
        <begin position="132"/>
        <end position="137"/>
    </location>
</feature>
<feature type="strand" evidence="2">
    <location>
        <begin position="157"/>
        <end position="161"/>
    </location>
</feature>
<feature type="helix" evidence="2">
    <location>
        <begin position="164"/>
        <end position="169"/>
    </location>
</feature>
<feature type="helix" evidence="2">
    <location>
        <begin position="170"/>
        <end position="174"/>
    </location>
</feature>
<feature type="helix" evidence="2">
    <location>
        <begin position="178"/>
        <end position="180"/>
    </location>
</feature>
<feature type="strand" evidence="2">
    <location>
        <begin position="183"/>
        <end position="187"/>
    </location>
</feature>
<feature type="helix" evidence="2">
    <location>
        <begin position="190"/>
        <end position="194"/>
    </location>
</feature>
<feature type="strand" evidence="2">
    <location>
        <begin position="199"/>
        <end position="203"/>
    </location>
</feature>
<feature type="helix" evidence="2">
    <location>
        <begin position="206"/>
        <end position="208"/>
    </location>
</feature>
<feature type="helix" evidence="2">
    <location>
        <begin position="209"/>
        <end position="216"/>
    </location>
</feature>
<feature type="helix" evidence="2">
    <location>
        <begin position="225"/>
        <end position="231"/>
    </location>
</feature>
<feature type="strand" evidence="2">
    <location>
        <begin position="232"/>
        <end position="239"/>
    </location>
</feature>
<feature type="helix" evidence="2">
    <location>
        <begin position="241"/>
        <end position="244"/>
    </location>
</feature>
<feature type="helix" evidence="2">
    <location>
        <begin position="249"/>
        <end position="261"/>
    </location>
</feature>
<accession>Q9CMF4</accession>